<proteinExistence type="inferred from homology"/>
<protein>
    <recommendedName>
        <fullName evidence="2">DNA-directed RNA polymerase RPB10 homolog</fullName>
        <shortName evidence="3">RPB10 homolog</shortName>
    </recommendedName>
</protein>
<organism>
    <name type="scientific">African swine fever virus (isolate Warthog/Namibia/Wart80/1980)</name>
    <name type="common">ASFV</name>
    <dbReference type="NCBI Taxonomy" id="561444"/>
    <lineage>
        <taxon>Viruses</taxon>
        <taxon>Varidnaviria</taxon>
        <taxon>Bamfordvirae</taxon>
        <taxon>Nucleocytoviricota</taxon>
        <taxon>Pokkesviricetes</taxon>
        <taxon>Asfuvirales</taxon>
        <taxon>Asfarviridae</taxon>
        <taxon>Asfivirus</taxon>
        <taxon>African swine fever virus</taxon>
    </lineage>
</organism>
<dbReference type="EMBL" id="AY261366">
    <property type="status" value="NOT_ANNOTATED_CDS"/>
    <property type="molecule type" value="Genomic_DNA"/>
</dbReference>
<dbReference type="SMR" id="P0C981"/>
<dbReference type="Proteomes" id="UP000000858">
    <property type="component" value="Segment"/>
</dbReference>
<dbReference type="GO" id="GO:0000428">
    <property type="term" value="C:DNA-directed RNA polymerase complex"/>
    <property type="evidence" value="ECO:0007669"/>
    <property type="project" value="UniProtKB-KW"/>
</dbReference>
<dbReference type="GO" id="GO:0030430">
    <property type="term" value="C:host cell cytoplasm"/>
    <property type="evidence" value="ECO:0007669"/>
    <property type="project" value="UniProtKB-SubCell"/>
</dbReference>
<dbReference type="GO" id="GO:0003677">
    <property type="term" value="F:DNA binding"/>
    <property type="evidence" value="ECO:0007669"/>
    <property type="project" value="InterPro"/>
</dbReference>
<dbReference type="GO" id="GO:0003899">
    <property type="term" value="F:DNA-directed RNA polymerase activity"/>
    <property type="evidence" value="ECO:0007669"/>
    <property type="project" value="InterPro"/>
</dbReference>
<dbReference type="GO" id="GO:0008270">
    <property type="term" value="F:zinc ion binding"/>
    <property type="evidence" value="ECO:0007669"/>
    <property type="project" value="InterPro"/>
</dbReference>
<dbReference type="GO" id="GO:0006351">
    <property type="term" value="P:DNA-templated transcription"/>
    <property type="evidence" value="ECO:0007669"/>
    <property type="project" value="InterPro"/>
</dbReference>
<dbReference type="Gene3D" id="1.10.10.60">
    <property type="entry name" value="Homeodomain-like"/>
    <property type="match status" value="1"/>
</dbReference>
<dbReference type="InterPro" id="IPR023580">
    <property type="entry name" value="RNA_pol_su_RPB10"/>
</dbReference>
<dbReference type="InterPro" id="IPR020789">
    <property type="entry name" value="RNA_pol_suN_Zn-BS"/>
</dbReference>
<dbReference type="InterPro" id="IPR000268">
    <property type="entry name" value="RPABC5/Rpb10"/>
</dbReference>
<dbReference type="Pfam" id="PF01194">
    <property type="entry name" value="RNA_pol_N"/>
    <property type="match status" value="1"/>
</dbReference>
<dbReference type="SUPFAM" id="SSF46924">
    <property type="entry name" value="RNA polymerase subunit RPB10"/>
    <property type="match status" value="1"/>
</dbReference>
<dbReference type="PROSITE" id="PS01112">
    <property type="entry name" value="RNA_POL_N_8KD"/>
    <property type="match status" value="1"/>
</dbReference>
<keyword id="KW-0240">DNA-directed RNA polymerase</keyword>
<keyword id="KW-1035">Host cytoplasm</keyword>
<keyword id="KW-0479">Metal-binding</keyword>
<keyword id="KW-0804">Transcription</keyword>
<keyword id="KW-0862">Zinc</keyword>
<feature type="chain" id="PRO_0000373080" description="DNA-directed RNA polymerase RPB10 homolog">
    <location>
        <begin position="1"/>
        <end position="80"/>
    </location>
</feature>
<feature type="binding site" evidence="1">
    <location>
        <position position="7"/>
    </location>
    <ligand>
        <name>Zn(2+)</name>
        <dbReference type="ChEBI" id="CHEBI:29105"/>
    </ligand>
</feature>
<feature type="binding site" evidence="1">
    <location>
        <position position="10"/>
    </location>
    <ligand>
        <name>Zn(2+)</name>
        <dbReference type="ChEBI" id="CHEBI:29105"/>
    </ligand>
</feature>
<feature type="binding site" evidence="1">
    <location>
        <position position="65"/>
    </location>
    <ligand>
        <name>Zn(2+)</name>
        <dbReference type="ChEBI" id="CHEBI:29105"/>
    </ligand>
</feature>
<feature type="binding site" evidence="1">
    <location>
        <position position="66"/>
    </location>
    <ligand>
        <name>Zn(2+)</name>
        <dbReference type="ChEBI" id="CHEBI:29105"/>
    </ligand>
</feature>
<evidence type="ECO:0000250" key="1">
    <source>
        <dbReference type="UniProtKB" id="P22139"/>
    </source>
</evidence>
<evidence type="ECO:0000250" key="2">
    <source>
        <dbReference type="UniProtKB" id="P42488"/>
    </source>
</evidence>
<evidence type="ECO:0000305" key="3"/>
<sequence length="80" mass="9031">MLIPVVCFTCGFPIGTYAAIFDKARTEYIKTKMGGTLPQNIPLDASLQIELKDLITALGIPMRVCCRTHLITTLDYRKYY</sequence>
<gene>
    <name type="ordered locus">War-105</name>
</gene>
<organismHost>
    <name type="scientific">Ornithodoros</name>
    <name type="common">relapsing fever ticks</name>
    <dbReference type="NCBI Taxonomy" id="6937"/>
</organismHost>
<organismHost>
    <name type="scientific">Phacochoerus aethiopicus</name>
    <name type="common">Warthog</name>
    <dbReference type="NCBI Taxonomy" id="85517"/>
</organismHost>
<organismHost>
    <name type="scientific">Phacochoerus africanus</name>
    <name type="common">Warthog</name>
    <dbReference type="NCBI Taxonomy" id="41426"/>
</organismHost>
<organismHost>
    <name type="scientific">Potamochoerus larvatus</name>
    <name type="common">Bushpig</name>
    <dbReference type="NCBI Taxonomy" id="273792"/>
</organismHost>
<organismHost>
    <name type="scientific">Sus scrofa</name>
    <name type="common">Pig</name>
    <dbReference type="NCBI Taxonomy" id="9823"/>
</organismHost>
<reference key="1">
    <citation type="submission" date="2003-03" db="EMBL/GenBank/DDBJ databases">
        <title>African swine fever virus genomes.</title>
        <authorList>
            <person name="Kutish G.F."/>
            <person name="Rock D.L."/>
        </authorList>
    </citation>
    <scope>NUCLEOTIDE SEQUENCE [LARGE SCALE GENOMIC DNA]</scope>
</reference>
<name>RPB10_ASFWA</name>
<comment type="function">
    <text evidence="1">Component of the DNA-directed RNA polymerase (RNAP) that catalyzes the transcription in the cytoplasm of viral DNA into RNA using the four ribonucleoside triphosphates as substrates.</text>
</comment>
<comment type="subunit">
    <text evidence="2">Part of the viral DNA-directed RNA polymerase that consists of 8 polII-like subunits (RPB1, RPB2, RPB3, RPB5, RPB6, RPB7, RPB9, RPB10), a capping enzyme and a termination factor.</text>
</comment>
<comment type="subcellular location">
    <subcellularLocation>
        <location evidence="3">Host cytoplasm</location>
    </subcellularLocation>
</comment>
<comment type="similarity">
    <text evidence="3">Belongs to the archaeal RpoN/eukaryotic RPB10 RNA polymerase subunit family.</text>
</comment>
<accession>P0C981</accession>